<protein>
    <recommendedName>
        <fullName>ATP-dependent RNA helicase DDX55</fullName>
        <ecNumber evidence="1">3.6.4.13</ecNumber>
    </recommendedName>
    <alternativeName>
        <fullName>DEAD box protein 55</fullName>
    </alternativeName>
</protein>
<keyword id="KW-0067">ATP-binding</keyword>
<keyword id="KW-0347">Helicase</keyword>
<keyword id="KW-0378">Hydrolase</keyword>
<keyword id="KW-0547">Nucleotide-binding</keyword>
<keyword id="KW-0539">Nucleus</keyword>
<keyword id="KW-0597">Phosphoprotein</keyword>
<keyword id="KW-1185">Reference proteome</keyword>
<keyword id="KW-0690">Ribosome biogenesis</keyword>
<keyword id="KW-0694">RNA-binding</keyword>
<keyword id="KW-0698">rRNA processing</keyword>
<keyword id="KW-0699">rRNA-binding</keyword>
<proteinExistence type="evidence at transcript level"/>
<feature type="chain" id="PRO_0000252209" description="ATP-dependent RNA helicase DDX55">
    <location>
        <begin position="1"/>
        <end position="601"/>
    </location>
</feature>
<feature type="domain" description="Helicase ATP-binding" evidence="2">
    <location>
        <begin position="40"/>
        <end position="223"/>
    </location>
</feature>
<feature type="domain" description="Helicase C-terminal" evidence="3">
    <location>
        <begin position="254"/>
        <end position="402"/>
    </location>
</feature>
<feature type="region of interest" description="Disordered" evidence="4">
    <location>
        <begin position="502"/>
        <end position="553"/>
    </location>
</feature>
<feature type="region of interest" description="Important for nuclear localization" evidence="1">
    <location>
        <begin position="534"/>
        <end position="563"/>
    </location>
</feature>
<feature type="region of interest" description="Disordered" evidence="4">
    <location>
        <begin position="576"/>
        <end position="601"/>
    </location>
</feature>
<feature type="short sequence motif" description="Q motif">
    <location>
        <begin position="9"/>
        <end position="37"/>
    </location>
</feature>
<feature type="short sequence motif" description="DEAD box">
    <location>
        <begin position="171"/>
        <end position="174"/>
    </location>
</feature>
<feature type="compositionally biased region" description="Basic and acidic residues" evidence="4">
    <location>
        <begin position="502"/>
        <end position="514"/>
    </location>
</feature>
<feature type="compositionally biased region" description="Basic residues" evidence="4">
    <location>
        <begin position="515"/>
        <end position="538"/>
    </location>
</feature>
<feature type="binding site" evidence="2">
    <location>
        <begin position="53"/>
        <end position="60"/>
    </location>
    <ligand>
        <name>ATP</name>
        <dbReference type="ChEBI" id="CHEBI:30616"/>
    </ligand>
</feature>
<feature type="modified residue" description="Phosphoserine" evidence="1">
    <location>
        <position position="545"/>
    </location>
</feature>
<feature type="modified residue" description="Phosphoserine" evidence="1">
    <location>
        <position position="595"/>
    </location>
</feature>
<dbReference type="EC" id="3.6.4.13" evidence="1"/>
<dbReference type="EMBL" id="BC111255">
    <property type="protein sequence ID" value="AAI11256.1"/>
    <property type="molecule type" value="mRNA"/>
</dbReference>
<dbReference type="RefSeq" id="NP_001039472.1">
    <property type="nucleotide sequence ID" value="NM_001046007.2"/>
</dbReference>
<dbReference type="SMR" id="Q2NL08"/>
<dbReference type="FunCoup" id="Q2NL08">
    <property type="interactions" value="4385"/>
</dbReference>
<dbReference type="STRING" id="9913.ENSBTAP00000009556"/>
<dbReference type="PaxDb" id="9913-ENSBTAP00000009556"/>
<dbReference type="GeneID" id="508581"/>
<dbReference type="KEGG" id="bta:508581"/>
<dbReference type="CTD" id="57696"/>
<dbReference type="eggNOG" id="KOG0331">
    <property type="taxonomic scope" value="Eukaryota"/>
</dbReference>
<dbReference type="eggNOG" id="KOG0345">
    <property type="taxonomic scope" value="Eukaryota"/>
</dbReference>
<dbReference type="InParanoid" id="Q2NL08"/>
<dbReference type="OrthoDB" id="7396459at2759"/>
<dbReference type="Proteomes" id="UP000009136">
    <property type="component" value="Unplaced"/>
</dbReference>
<dbReference type="GO" id="GO:0005730">
    <property type="term" value="C:nucleolus"/>
    <property type="evidence" value="ECO:0000318"/>
    <property type="project" value="GO_Central"/>
</dbReference>
<dbReference type="GO" id="GO:0005524">
    <property type="term" value="F:ATP binding"/>
    <property type="evidence" value="ECO:0007669"/>
    <property type="project" value="UniProtKB-KW"/>
</dbReference>
<dbReference type="GO" id="GO:0016887">
    <property type="term" value="F:ATP hydrolysis activity"/>
    <property type="evidence" value="ECO:0007669"/>
    <property type="project" value="RHEA"/>
</dbReference>
<dbReference type="GO" id="GO:0003723">
    <property type="term" value="F:RNA binding"/>
    <property type="evidence" value="ECO:0007669"/>
    <property type="project" value="UniProtKB-KW"/>
</dbReference>
<dbReference type="GO" id="GO:0003724">
    <property type="term" value="F:RNA helicase activity"/>
    <property type="evidence" value="ECO:0007669"/>
    <property type="project" value="UniProtKB-EC"/>
</dbReference>
<dbReference type="CDD" id="cd17960">
    <property type="entry name" value="DEADc_DDX55"/>
    <property type="match status" value="1"/>
</dbReference>
<dbReference type="CDD" id="cd18787">
    <property type="entry name" value="SF2_C_DEAD"/>
    <property type="match status" value="1"/>
</dbReference>
<dbReference type="FunFam" id="3.40.50.300:FF:000877">
    <property type="entry name" value="RNA helicase"/>
    <property type="match status" value="1"/>
</dbReference>
<dbReference type="FunFam" id="3.40.50.300:FF:001022">
    <property type="entry name" value="RNA helicase"/>
    <property type="match status" value="1"/>
</dbReference>
<dbReference type="Gene3D" id="3.40.50.300">
    <property type="entry name" value="P-loop containing nucleotide triphosphate hydrolases"/>
    <property type="match status" value="2"/>
</dbReference>
<dbReference type="InterPro" id="IPR011545">
    <property type="entry name" value="DEAD/DEAH_box_helicase_dom"/>
</dbReference>
<dbReference type="InterPro" id="IPR014001">
    <property type="entry name" value="Helicase_ATP-bd"/>
</dbReference>
<dbReference type="InterPro" id="IPR001650">
    <property type="entry name" value="Helicase_C-like"/>
</dbReference>
<dbReference type="InterPro" id="IPR027417">
    <property type="entry name" value="P-loop_NTPase"/>
</dbReference>
<dbReference type="InterPro" id="IPR000629">
    <property type="entry name" value="RNA-helicase_DEAD-box_CS"/>
</dbReference>
<dbReference type="InterPro" id="IPR014014">
    <property type="entry name" value="RNA_helicase_DEAD_Q_motif"/>
</dbReference>
<dbReference type="InterPro" id="IPR025313">
    <property type="entry name" value="SPB4-like_CTE"/>
</dbReference>
<dbReference type="PANTHER" id="PTHR24031">
    <property type="entry name" value="RNA HELICASE"/>
    <property type="match status" value="1"/>
</dbReference>
<dbReference type="Pfam" id="PF13959">
    <property type="entry name" value="CTE_SPB4"/>
    <property type="match status" value="1"/>
</dbReference>
<dbReference type="Pfam" id="PF00270">
    <property type="entry name" value="DEAD"/>
    <property type="match status" value="1"/>
</dbReference>
<dbReference type="Pfam" id="PF00271">
    <property type="entry name" value="Helicase_C"/>
    <property type="match status" value="1"/>
</dbReference>
<dbReference type="SMART" id="SM00487">
    <property type="entry name" value="DEXDc"/>
    <property type="match status" value="1"/>
</dbReference>
<dbReference type="SMART" id="SM01178">
    <property type="entry name" value="DUF4217"/>
    <property type="match status" value="1"/>
</dbReference>
<dbReference type="SMART" id="SM00490">
    <property type="entry name" value="HELICc"/>
    <property type="match status" value="1"/>
</dbReference>
<dbReference type="SUPFAM" id="SSF52540">
    <property type="entry name" value="P-loop containing nucleoside triphosphate hydrolases"/>
    <property type="match status" value="1"/>
</dbReference>
<dbReference type="PROSITE" id="PS00039">
    <property type="entry name" value="DEAD_ATP_HELICASE"/>
    <property type="match status" value="1"/>
</dbReference>
<dbReference type="PROSITE" id="PS51192">
    <property type="entry name" value="HELICASE_ATP_BIND_1"/>
    <property type="match status" value="1"/>
</dbReference>
<dbReference type="PROSITE" id="PS51194">
    <property type="entry name" value="HELICASE_CTER"/>
    <property type="match status" value="1"/>
</dbReference>
<dbReference type="PROSITE" id="PS51195">
    <property type="entry name" value="Q_MOTIF"/>
    <property type="match status" value="1"/>
</dbReference>
<gene>
    <name type="primary">DDX55</name>
</gene>
<accession>Q2NL08</accession>
<reference key="1">
    <citation type="submission" date="2005-12" db="EMBL/GenBank/DDBJ databases">
        <authorList>
            <consortium name="NIH - Mammalian Gene Collection (MGC) project"/>
        </authorList>
    </citation>
    <scope>NUCLEOTIDE SEQUENCE [LARGE SCALE MRNA]</scope>
    <source>
        <strain>Crossbred X Angus</strain>
        <tissue>Liver</tissue>
    </source>
</reference>
<name>DDX55_BOVIN</name>
<sequence>MEHVTEGSWESLPVPLHPKVLSVLRELGFPYMTPVQSATIPLFMKNKDVAAEAVTGSGKTLAFVIPIEEILLRREEKFKKSQVGAIIITPTRELAVQIEEVLSHFTKPFPQFSQILWIGGRNPGEDVARFKELGGNIIVATPGRLEDMFRRKAEGLDLASCVRSLEVLVLDEADRLLDMGFETSINTILEFLPKQRRTGLFSATQTQEVENLVRAGLRNPVRISVKEKGVAASSTQKTPSRLENHYMVCKADEKFNQLVHFLRNHKQEKHLVFFSTCACVEYYGKALETLVKGVKIMCIHGKMKYKRNKIFMEFRKLQSGILVCTDVMARGIDIPEVNWVLQYDPPSNASAFVHRCGRTARIGHGGSALVFLLPMEESYISFLAINQKCPLQEMKLQKNTADLLPKLKAMALGDRAVFEKGMKAFVSYVQAYAKHECNLIFRLKDLDFASLARGFALLRMPKMPELRGKQFPDFVPVDVNTDTIPFKDKIREKQRQKQLLEQQRKEKTENDGRRKFIKNKAWSKQKAKKEKKKKLTEKRKREEGSDVEDEDMEELLNDTRLLKKFKKGKITEEEFEKGLLTSGKRSTNKADLEISDLEDDC</sequence>
<organism>
    <name type="scientific">Bos taurus</name>
    <name type="common">Bovine</name>
    <dbReference type="NCBI Taxonomy" id="9913"/>
    <lineage>
        <taxon>Eukaryota</taxon>
        <taxon>Metazoa</taxon>
        <taxon>Chordata</taxon>
        <taxon>Craniata</taxon>
        <taxon>Vertebrata</taxon>
        <taxon>Euteleostomi</taxon>
        <taxon>Mammalia</taxon>
        <taxon>Eutheria</taxon>
        <taxon>Laurasiatheria</taxon>
        <taxon>Artiodactyla</taxon>
        <taxon>Ruminantia</taxon>
        <taxon>Pecora</taxon>
        <taxon>Bovidae</taxon>
        <taxon>Bovinae</taxon>
        <taxon>Bos</taxon>
    </lineage>
</organism>
<comment type="function">
    <text evidence="1">Probable ATP-binding RNA helicase. Has ATPase activity and is involved in the maturation of precursor large subunit rRNAs (By similarity).</text>
</comment>
<comment type="catalytic activity">
    <reaction evidence="1">
        <text>ATP + H2O = ADP + phosphate + H(+)</text>
        <dbReference type="Rhea" id="RHEA:13065"/>
        <dbReference type="ChEBI" id="CHEBI:15377"/>
        <dbReference type="ChEBI" id="CHEBI:15378"/>
        <dbReference type="ChEBI" id="CHEBI:30616"/>
        <dbReference type="ChEBI" id="CHEBI:43474"/>
        <dbReference type="ChEBI" id="CHEBI:456216"/>
        <dbReference type="EC" id="3.6.4.13"/>
    </reaction>
</comment>
<comment type="subunit">
    <text evidence="1">Interacts with 28S rRNA. Interacts with double-stranded RNA substrates in vitro; the interaction stimulates ATPase activity.</text>
</comment>
<comment type="subcellular location">
    <subcellularLocation>
        <location evidence="1">Nucleus</location>
        <location evidence="1">Nucleoplasm</location>
    </subcellularLocation>
</comment>
<comment type="domain">
    <text>The Q motif is unique to and characteristic of the DEAD box family of RNA helicases and controls ATP binding and hydrolysis.</text>
</comment>
<comment type="domain">
    <text evidence="1">The C-terminal region is required for DDX55 nuclear import and association with pre-ribosomal complexes.</text>
</comment>
<comment type="similarity">
    <text evidence="5">Belongs to the DEAD box helicase family. DDX55/SPB4 subfamily.</text>
</comment>
<evidence type="ECO:0000250" key="1">
    <source>
        <dbReference type="UniProtKB" id="Q8NHQ9"/>
    </source>
</evidence>
<evidence type="ECO:0000255" key="2">
    <source>
        <dbReference type="PROSITE-ProRule" id="PRU00541"/>
    </source>
</evidence>
<evidence type="ECO:0000255" key="3">
    <source>
        <dbReference type="PROSITE-ProRule" id="PRU00542"/>
    </source>
</evidence>
<evidence type="ECO:0000256" key="4">
    <source>
        <dbReference type="SAM" id="MobiDB-lite"/>
    </source>
</evidence>
<evidence type="ECO:0000305" key="5"/>